<dbReference type="EMBL" id="AF492591">
    <property type="protein sequence ID" value="AAO31543.1"/>
    <property type="molecule type" value="Genomic_DNA"/>
</dbReference>
<dbReference type="RefSeq" id="WP_011097469.1">
    <property type="nucleotide sequence ID" value="NC_004555.1"/>
</dbReference>
<dbReference type="KEGG" id="bab:yqhA"/>
<dbReference type="eggNOG" id="COG2862">
    <property type="taxonomic scope" value="Bacteria"/>
</dbReference>
<dbReference type="HOGENOM" id="CLU_097887_1_1_6"/>
<dbReference type="OrthoDB" id="9783569at2"/>
<dbReference type="Proteomes" id="UP000000601">
    <property type="component" value="Plasmid pBBp1"/>
</dbReference>
<dbReference type="GO" id="GO:0005886">
    <property type="term" value="C:plasma membrane"/>
    <property type="evidence" value="ECO:0007669"/>
    <property type="project" value="UniProtKB-SubCell"/>
</dbReference>
<dbReference type="HAMAP" id="MF_00143">
    <property type="entry name" value="UPF0114"/>
    <property type="match status" value="1"/>
</dbReference>
<dbReference type="InterPro" id="IPR005134">
    <property type="entry name" value="UPF0114"/>
</dbReference>
<dbReference type="InterPro" id="IPR020761">
    <property type="entry name" value="UPF0114_bac"/>
</dbReference>
<dbReference type="NCBIfam" id="TIGR00645">
    <property type="entry name" value="HI0507"/>
    <property type="match status" value="1"/>
</dbReference>
<dbReference type="PANTHER" id="PTHR38596">
    <property type="entry name" value="UPF0114 PROTEIN YQHA"/>
    <property type="match status" value="1"/>
</dbReference>
<dbReference type="PANTHER" id="PTHR38596:SF1">
    <property type="entry name" value="UPF0114 PROTEIN YQHA"/>
    <property type="match status" value="1"/>
</dbReference>
<dbReference type="Pfam" id="PF03350">
    <property type="entry name" value="UPF0114"/>
    <property type="match status" value="1"/>
</dbReference>
<sequence>MEKLIERIIYASRWLMFPVYIGLSLGFILLTLKFFQQIIFVIPKILMMSESGLVLVVLSLIDISLVGGLLVMVMFSGYENFISKMEIKTDKKKLGWMGTMDVNSIKNKVASSIVAISSVHSLRLFMDAEKISNDQIMWCVLIHLTFVISAFGMACIDKMSKRGYS</sequence>
<organism>
    <name type="scientific">Buchnera aphidicola subsp. Baizongia pistaciae (strain Bp)</name>
    <dbReference type="NCBI Taxonomy" id="224915"/>
    <lineage>
        <taxon>Bacteria</taxon>
        <taxon>Pseudomonadati</taxon>
        <taxon>Pseudomonadota</taxon>
        <taxon>Gammaproteobacteria</taxon>
        <taxon>Enterobacterales</taxon>
        <taxon>Erwiniaceae</taxon>
        <taxon>Buchnera</taxon>
    </lineage>
</organism>
<proteinExistence type="inferred from homology"/>
<gene>
    <name type="ordered locus">bbp_601</name>
</gene>
<comment type="subcellular location">
    <subcellularLocation>
        <location evidence="1">Cell membrane</location>
        <topology evidence="1">Multi-pass membrane protein</topology>
    </subcellularLocation>
</comment>
<comment type="similarity">
    <text evidence="1">Belongs to the UPF0114 family.</text>
</comment>
<protein>
    <recommendedName>
        <fullName evidence="1">UPF0114 protein in repA1-repA2 intergenic region</fullName>
    </recommendedName>
</protein>
<feature type="chain" id="PRO_0000214384" description="UPF0114 protein in repA1-repA2 intergenic region">
    <location>
        <begin position="1"/>
        <end position="165"/>
    </location>
</feature>
<feature type="transmembrane region" description="Helical" evidence="1">
    <location>
        <begin position="10"/>
        <end position="32"/>
    </location>
</feature>
<feature type="transmembrane region" description="Helical" evidence="1">
    <location>
        <begin position="53"/>
        <end position="75"/>
    </location>
</feature>
<feature type="transmembrane region" description="Helical" evidence="1">
    <location>
        <begin position="134"/>
        <end position="156"/>
    </location>
</feature>
<evidence type="ECO:0000255" key="1">
    <source>
        <dbReference type="HAMAP-Rule" id="MF_00143"/>
    </source>
</evidence>
<accession>Q89B48</accession>
<name>YREP_BUCBP</name>
<geneLocation type="plasmid">
    <name>pBBp1</name>
</geneLocation>
<keyword id="KW-1003">Cell membrane</keyword>
<keyword id="KW-0472">Membrane</keyword>
<keyword id="KW-0614">Plasmid</keyword>
<keyword id="KW-1185">Reference proteome</keyword>
<keyword id="KW-0812">Transmembrane</keyword>
<keyword id="KW-1133">Transmembrane helix</keyword>
<reference key="1">
    <citation type="journal article" date="2003" name="Proc. Natl. Acad. Sci. U.S.A.">
        <title>Reductive genome evolution in Buchnera aphidicola.</title>
        <authorList>
            <person name="van Ham R.C.H.J."/>
            <person name="Kamerbeek J."/>
            <person name="Palacios C."/>
            <person name="Rausell C."/>
            <person name="Abascal F."/>
            <person name="Bastolla U."/>
            <person name="Fernandez J.M."/>
            <person name="Jimenez L."/>
            <person name="Postigo M."/>
            <person name="Silva F.J."/>
            <person name="Tamames J."/>
            <person name="Viguera E."/>
            <person name="Latorre A."/>
            <person name="Valencia A."/>
            <person name="Moran F."/>
            <person name="Moya A."/>
        </authorList>
    </citation>
    <scope>NUCLEOTIDE SEQUENCE [LARGE SCALE GENOMIC DNA]</scope>
    <source>
        <strain>Bp</strain>
    </source>
</reference>